<evidence type="ECO:0000250" key="1">
    <source>
        <dbReference type="UniProtKB" id="P28523"/>
    </source>
</evidence>
<evidence type="ECO:0000250" key="2">
    <source>
        <dbReference type="UniProtKB" id="P41892"/>
    </source>
</evidence>
<evidence type="ECO:0000255" key="3"/>
<evidence type="ECO:0000255" key="4">
    <source>
        <dbReference type="PROSITE-ProRule" id="PRU00159"/>
    </source>
</evidence>
<evidence type="ECO:0000255" key="5">
    <source>
        <dbReference type="PROSITE-ProRule" id="PRU10027"/>
    </source>
</evidence>
<evidence type="ECO:0000256" key="6">
    <source>
        <dbReference type="SAM" id="MobiDB-lite"/>
    </source>
</evidence>
<evidence type="ECO:0000312" key="7">
    <source>
        <dbReference type="EMBL" id="EAL72423.1"/>
    </source>
</evidence>
<accession>Q55CA6</accession>
<reference evidence="7" key="1">
    <citation type="journal article" date="2005" name="Nature">
        <title>The genome of the social amoeba Dictyostelium discoideum.</title>
        <authorList>
            <person name="Eichinger L."/>
            <person name="Pachebat J.A."/>
            <person name="Gloeckner G."/>
            <person name="Rajandream M.A."/>
            <person name="Sucgang R."/>
            <person name="Berriman M."/>
            <person name="Song J."/>
            <person name="Olsen R."/>
            <person name="Szafranski K."/>
            <person name="Xu Q."/>
            <person name="Tunggal B."/>
            <person name="Kummerfeld S."/>
            <person name="Madera M."/>
            <person name="Konfortov B.A."/>
            <person name="Rivero F."/>
            <person name="Bankier A.T."/>
            <person name="Lehmann R."/>
            <person name="Hamlin N."/>
            <person name="Davies R."/>
            <person name="Gaudet P."/>
            <person name="Fey P."/>
            <person name="Pilcher K."/>
            <person name="Chen G."/>
            <person name="Saunders D."/>
            <person name="Sodergren E.J."/>
            <person name="Davis P."/>
            <person name="Kerhornou A."/>
            <person name="Nie X."/>
            <person name="Hall N."/>
            <person name="Anjard C."/>
            <person name="Hemphill L."/>
            <person name="Bason N."/>
            <person name="Farbrother P."/>
            <person name="Desany B."/>
            <person name="Just E."/>
            <person name="Morio T."/>
            <person name="Rost R."/>
            <person name="Churcher C.M."/>
            <person name="Cooper J."/>
            <person name="Haydock S."/>
            <person name="van Driessche N."/>
            <person name="Cronin A."/>
            <person name="Goodhead I."/>
            <person name="Muzny D.M."/>
            <person name="Mourier T."/>
            <person name="Pain A."/>
            <person name="Lu M."/>
            <person name="Harper D."/>
            <person name="Lindsay R."/>
            <person name="Hauser H."/>
            <person name="James K.D."/>
            <person name="Quiles M."/>
            <person name="Madan Babu M."/>
            <person name="Saito T."/>
            <person name="Buchrieser C."/>
            <person name="Wardroper A."/>
            <person name="Felder M."/>
            <person name="Thangavelu M."/>
            <person name="Johnson D."/>
            <person name="Knights A."/>
            <person name="Loulseged H."/>
            <person name="Mungall K.L."/>
            <person name="Oliver K."/>
            <person name="Price C."/>
            <person name="Quail M.A."/>
            <person name="Urushihara H."/>
            <person name="Hernandez J."/>
            <person name="Rabbinowitsch E."/>
            <person name="Steffen D."/>
            <person name="Sanders M."/>
            <person name="Ma J."/>
            <person name="Kohara Y."/>
            <person name="Sharp S."/>
            <person name="Simmonds M.N."/>
            <person name="Spiegler S."/>
            <person name="Tivey A."/>
            <person name="Sugano S."/>
            <person name="White B."/>
            <person name="Walker D."/>
            <person name="Woodward J.R."/>
            <person name="Winckler T."/>
            <person name="Tanaka Y."/>
            <person name="Shaulsky G."/>
            <person name="Schleicher M."/>
            <person name="Weinstock G.M."/>
            <person name="Rosenthal A."/>
            <person name="Cox E.C."/>
            <person name="Chisholm R.L."/>
            <person name="Gibbs R.A."/>
            <person name="Loomis W.F."/>
            <person name="Platzer M."/>
            <person name="Kay R.R."/>
            <person name="Williams J.G."/>
            <person name="Dear P.H."/>
            <person name="Noegel A.A."/>
            <person name="Barrell B.G."/>
            <person name="Kuspa A."/>
        </authorList>
    </citation>
    <scope>NUCLEOTIDE SEQUENCE [LARGE SCALE GENOMIC DNA]</scope>
    <source>
        <strain evidence="7">AX4</strain>
    </source>
</reference>
<organism>
    <name type="scientific">Dictyostelium discoideum</name>
    <name type="common">Social amoeba</name>
    <dbReference type="NCBI Taxonomy" id="44689"/>
    <lineage>
        <taxon>Eukaryota</taxon>
        <taxon>Amoebozoa</taxon>
        <taxon>Evosea</taxon>
        <taxon>Eumycetozoa</taxon>
        <taxon>Dictyostelia</taxon>
        <taxon>Dictyosteliales</taxon>
        <taxon>Dictyosteliaceae</taxon>
        <taxon>Dictyostelium</taxon>
    </lineage>
</organism>
<proteinExistence type="inferred from homology"/>
<keyword id="KW-0067">ATP-binding</keyword>
<keyword id="KW-0175">Coiled coil</keyword>
<keyword id="KW-0418">Kinase</keyword>
<keyword id="KW-0460">Magnesium</keyword>
<keyword id="KW-0479">Metal-binding</keyword>
<keyword id="KW-0547">Nucleotide-binding</keyword>
<keyword id="KW-1185">Reference proteome</keyword>
<keyword id="KW-0723">Serine/threonine-protein kinase</keyword>
<keyword id="KW-0808">Transferase</keyword>
<name>Y0146_DICDI</name>
<dbReference type="EC" id="2.7.11.1"/>
<dbReference type="EMBL" id="AAFI02000005">
    <property type="protein sequence ID" value="EAL72423.1"/>
    <property type="molecule type" value="Genomic_DNA"/>
</dbReference>
<dbReference type="RefSeq" id="XP_646575.1">
    <property type="nucleotide sequence ID" value="XM_641483.1"/>
</dbReference>
<dbReference type="SMR" id="Q55CA6"/>
<dbReference type="STRING" id="44689.Q55CA6"/>
<dbReference type="PaxDb" id="44689-DDB0229971"/>
<dbReference type="EnsemblProtists" id="EAL72423">
    <property type="protein sequence ID" value="EAL72423"/>
    <property type="gene ID" value="DDB_G0270146"/>
</dbReference>
<dbReference type="GeneID" id="8617545"/>
<dbReference type="KEGG" id="ddi:DDB_G0270146"/>
<dbReference type="dictyBase" id="DDB_G0270146"/>
<dbReference type="VEuPathDB" id="AmoebaDB:DDB_G0270146"/>
<dbReference type="eggNOG" id="KOG0198">
    <property type="taxonomic scope" value="Eukaryota"/>
</dbReference>
<dbReference type="HOGENOM" id="CLU_431133_0_0_1"/>
<dbReference type="InParanoid" id="Q55CA6"/>
<dbReference type="OMA" id="IETEYFQ"/>
<dbReference type="PhylomeDB" id="Q55CA6"/>
<dbReference type="Reactome" id="R-DDI-2871796">
    <property type="pathway name" value="FCERI mediated MAPK activation"/>
</dbReference>
<dbReference type="PRO" id="PR:Q55CA6"/>
<dbReference type="Proteomes" id="UP000002195">
    <property type="component" value="Chromosome 1"/>
</dbReference>
<dbReference type="GO" id="GO:0005737">
    <property type="term" value="C:cytoplasm"/>
    <property type="evidence" value="ECO:0000318"/>
    <property type="project" value="GO_Central"/>
</dbReference>
<dbReference type="GO" id="GO:0005524">
    <property type="term" value="F:ATP binding"/>
    <property type="evidence" value="ECO:0007669"/>
    <property type="project" value="UniProtKB-KW"/>
</dbReference>
<dbReference type="GO" id="GO:0046872">
    <property type="term" value="F:metal ion binding"/>
    <property type="evidence" value="ECO:0007669"/>
    <property type="project" value="UniProtKB-KW"/>
</dbReference>
<dbReference type="GO" id="GO:0106310">
    <property type="term" value="F:protein serine kinase activity"/>
    <property type="evidence" value="ECO:0007669"/>
    <property type="project" value="RHEA"/>
</dbReference>
<dbReference type="GO" id="GO:0004674">
    <property type="term" value="F:protein serine/threonine kinase activity"/>
    <property type="evidence" value="ECO:0000318"/>
    <property type="project" value="GO_Central"/>
</dbReference>
<dbReference type="CDD" id="cd06627">
    <property type="entry name" value="STKc_Cdc7_like"/>
    <property type="match status" value="1"/>
</dbReference>
<dbReference type="FunFam" id="1.10.510.10:FF:000946">
    <property type="entry name" value="Probable serine/threonine-protein kinase DDB_G0284251"/>
    <property type="match status" value="1"/>
</dbReference>
<dbReference type="Gene3D" id="1.10.510.10">
    <property type="entry name" value="Transferase(Phosphotransferase) domain 1"/>
    <property type="match status" value="1"/>
</dbReference>
<dbReference type="InterPro" id="IPR011009">
    <property type="entry name" value="Kinase-like_dom_sf"/>
</dbReference>
<dbReference type="InterPro" id="IPR000719">
    <property type="entry name" value="Prot_kinase_dom"/>
</dbReference>
<dbReference type="InterPro" id="IPR017441">
    <property type="entry name" value="Protein_kinase_ATP_BS"/>
</dbReference>
<dbReference type="InterPro" id="IPR001245">
    <property type="entry name" value="Ser-Thr/Tyr_kinase_cat_dom"/>
</dbReference>
<dbReference type="InterPro" id="IPR008271">
    <property type="entry name" value="Ser/Thr_kinase_AS"/>
</dbReference>
<dbReference type="InterPro" id="IPR050629">
    <property type="entry name" value="STE20/SPS1-PAK"/>
</dbReference>
<dbReference type="PANTHER" id="PTHR48012:SF26">
    <property type="entry name" value="SERINE_THREONINE-PROTEIN KINASE DDB_G0283821-RELATED"/>
    <property type="match status" value="1"/>
</dbReference>
<dbReference type="PANTHER" id="PTHR48012">
    <property type="entry name" value="STERILE20-LIKE KINASE, ISOFORM B-RELATED"/>
    <property type="match status" value="1"/>
</dbReference>
<dbReference type="Pfam" id="PF00069">
    <property type="entry name" value="Pkinase"/>
    <property type="match status" value="1"/>
</dbReference>
<dbReference type="PRINTS" id="PR00109">
    <property type="entry name" value="TYRKINASE"/>
</dbReference>
<dbReference type="SMART" id="SM00220">
    <property type="entry name" value="S_TKc"/>
    <property type="match status" value="1"/>
</dbReference>
<dbReference type="SUPFAM" id="SSF56112">
    <property type="entry name" value="Protein kinase-like (PK-like)"/>
    <property type="match status" value="1"/>
</dbReference>
<dbReference type="PROSITE" id="PS00107">
    <property type="entry name" value="PROTEIN_KINASE_ATP"/>
    <property type="match status" value="1"/>
</dbReference>
<dbReference type="PROSITE" id="PS50011">
    <property type="entry name" value="PROTEIN_KINASE_DOM"/>
    <property type="match status" value="1"/>
</dbReference>
<dbReference type="PROSITE" id="PS00108">
    <property type="entry name" value="PROTEIN_KINASE_ST"/>
    <property type="match status" value="1"/>
</dbReference>
<feature type="chain" id="PRO_0000370244" description="Probable serine/threonine-protein kinase DDB_G0270146">
    <location>
        <begin position="1"/>
        <end position="635"/>
    </location>
</feature>
<feature type="domain" description="Protein kinase" evidence="4">
    <location>
        <begin position="77"/>
        <end position="329"/>
    </location>
</feature>
<feature type="region of interest" description="Disordered" evidence="6">
    <location>
        <begin position="360"/>
        <end position="405"/>
    </location>
</feature>
<feature type="region of interest" description="Disordered" evidence="6">
    <location>
        <begin position="540"/>
        <end position="635"/>
    </location>
</feature>
<feature type="coiled-coil region" evidence="3">
    <location>
        <begin position="417"/>
        <end position="456"/>
    </location>
</feature>
<feature type="coiled-coil region" evidence="3">
    <location>
        <begin position="536"/>
        <end position="585"/>
    </location>
</feature>
<feature type="compositionally biased region" description="Low complexity" evidence="6">
    <location>
        <begin position="360"/>
        <end position="392"/>
    </location>
</feature>
<feature type="compositionally biased region" description="Basic and acidic residues" evidence="6">
    <location>
        <begin position="540"/>
        <end position="582"/>
    </location>
</feature>
<feature type="compositionally biased region" description="Low complexity" evidence="6">
    <location>
        <begin position="583"/>
        <end position="598"/>
    </location>
</feature>
<feature type="compositionally biased region" description="Polar residues" evidence="6">
    <location>
        <begin position="626"/>
        <end position="635"/>
    </location>
</feature>
<feature type="active site" description="Proton acceptor" evidence="1 4 5">
    <location>
        <position position="199"/>
    </location>
</feature>
<feature type="binding site" evidence="1 4">
    <location>
        <begin position="83"/>
        <end position="91"/>
    </location>
    <ligand>
        <name>ATP</name>
        <dbReference type="ChEBI" id="CHEBI:30616"/>
    </ligand>
</feature>
<feature type="binding site" evidence="1 4">
    <location>
        <position position="106"/>
    </location>
    <ligand>
        <name>ATP</name>
        <dbReference type="ChEBI" id="CHEBI:30616"/>
    </ligand>
</feature>
<protein>
    <recommendedName>
        <fullName>Probable serine/threonine-protein kinase DDB_G0270146</fullName>
        <ecNumber>2.7.11.1</ecNumber>
    </recommendedName>
</protein>
<comment type="catalytic activity">
    <reaction evidence="2">
        <text>L-seryl-[protein] + ATP = O-phospho-L-seryl-[protein] + ADP + H(+)</text>
        <dbReference type="Rhea" id="RHEA:17989"/>
        <dbReference type="Rhea" id="RHEA-COMP:9863"/>
        <dbReference type="Rhea" id="RHEA-COMP:11604"/>
        <dbReference type="ChEBI" id="CHEBI:15378"/>
        <dbReference type="ChEBI" id="CHEBI:29999"/>
        <dbReference type="ChEBI" id="CHEBI:30616"/>
        <dbReference type="ChEBI" id="CHEBI:83421"/>
        <dbReference type="ChEBI" id="CHEBI:456216"/>
        <dbReference type="EC" id="2.7.11.1"/>
    </reaction>
</comment>
<comment type="catalytic activity">
    <reaction evidence="2">
        <text>L-threonyl-[protein] + ATP = O-phospho-L-threonyl-[protein] + ADP + H(+)</text>
        <dbReference type="Rhea" id="RHEA:46608"/>
        <dbReference type="Rhea" id="RHEA-COMP:11060"/>
        <dbReference type="Rhea" id="RHEA-COMP:11605"/>
        <dbReference type="ChEBI" id="CHEBI:15378"/>
        <dbReference type="ChEBI" id="CHEBI:30013"/>
        <dbReference type="ChEBI" id="CHEBI:30616"/>
        <dbReference type="ChEBI" id="CHEBI:61977"/>
        <dbReference type="ChEBI" id="CHEBI:456216"/>
        <dbReference type="EC" id="2.7.11.1"/>
    </reaction>
</comment>
<comment type="cofactor">
    <cofactor evidence="2">
        <name>Mg(2+)</name>
        <dbReference type="ChEBI" id="CHEBI:18420"/>
    </cofactor>
</comment>
<comment type="similarity">
    <text evidence="2">Belongs to the protein kinase superfamily. STE Ser/Thr protein kinase family.</text>
</comment>
<gene>
    <name type="ORF">DDB_G0270146</name>
</gene>
<sequence>MNIKSELNYSNGSNDSDIYNEYGGGSGDETYNKSDTVDFRSKVIPQQSNLPPINNKTDRSHFRESMVASKKTIGAFVISDIAIGKGAFATVFKGLNTLSGDFVAIKRFEKSKISNEQHSSVSTEFDILQRLNHENIVRILGREENENYIYIFLEYMENGSLSTILNNFGTFPESLICNYVENVLKGLVYLHQEGVIHRDIKAANILINKAGEAKLSDFGTAGEIIKESDKRYSVVGTPYWMAPEVIEISGHCQVSDIWSLGCTIIELFTSYPPYFDLNPLGAMYRICQDDRPPLPDDISSELANFLERCFCKSTEERATAKELLSHPWITKNRTNLINHQRNSSKQFTSPQIIINNHQKSLLSNSSGGDDSVTDSDLSISNQSSRSSSFLLDDGGGGGGSKNHTVILTKQQPTPDQIEFNKMQMELQLLRLRVGELETDLKKEQDLKKDSDRKYREILLSSMHYIYIIDSTMNTITNSGGQSIKPQISNDVNHLRSIMRDQIETEYFQTFPDDNMVPRFIQRRFTHVDQANMMIPKKALEAQKRREKEQEKLKEQEKLKEKKKEKDIKKEKDKKDKKDKQLKDSSSSTTTTNSTPSTPDHSAFHSSPITPLSPVRENSKPFLSLKGRSSSKIFNE</sequence>